<proteinExistence type="evidence at protein level"/>
<feature type="chain" id="PRO_0000091391" description="Elongation factor Tu">
    <location>
        <begin position="1"/>
        <end position="394"/>
    </location>
</feature>
<feature type="domain" description="tr-type G">
    <location>
        <begin position="10"/>
        <end position="204"/>
    </location>
</feature>
<feature type="region of interest" description="G1" evidence="1">
    <location>
        <begin position="19"/>
        <end position="26"/>
    </location>
</feature>
<feature type="region of interest" description="G2" evidence="1">
    <location>
        <begin position="60"/>
        <end position="64"/>
    </location>
</feature>
<feature type="region of interest" description="G3" evidence="1">
    <location>
        <begin position="81"/>
        <end position="84"/>
    </location>
</feature>
<feature type="region of interest" description="G4" evidence="1">
    <location>
        <begin position="136"/>
        <end position="139"/>
    </location>
</feature>
<feature type="region of interest" description="G5" evidence="1">
    <location>
        <begin position="174"/>
        <end position="176"/>
    </location>
</feature>
<feature type="binding site" evidence="2">
    <location>
        <begin position="19"/>
        <end position="26"/>
    </location>
    <ligand>
        <name>GTP</name>
        <dbReference type="ChEBI" id="CHEBI:37565"/>
    </ligand>
</feature>
<feature type="binding site" evidence="2">
    <location>
        <position position="26"/>
    </location>
    <ligand>
        <name>Mg(2+)</name>
        <dbReference type="ChEBI" id="CHEBI:18420"/>
    </ligand>
</feature>
<feature type="binding site" evidence="2">
    <location>
        <begin position="81"/>
        <end position="85"/>
    </location>
    <ligand>
        <name>GTP</name>
        <dbReference type="ChEBI" id="CHEBI:37565"/>
    </ligand>
</feature>
<feature type="binding site" evidence="2">
    <location>
        <begin position="136"/>
        <end position="139"/>
    </location>
    <ligand>
        <name>GTP</name>
        <dbReference type="ChEBI" id="CHEBI:37565"/>
    </ligand>
</feature>
<dbReference type="EC" id="3.6.5.3" evidence="2"/>
<dbReference type="EMBL" id="BA000018">
    <property type="protein sequence ID" value="BAB41737.1"/>
    <property type="molecule type" value="Genomic_DNA"/>
</dbReference>
<dbReference type="PIR" id="F89822">
    <property type="entry name" value="F89822"/>
</dbReference>
<dbReference type="RefSeq" id="WP_001040568.1">
    <property type="nucleotide sequence ID" value="NC_002745.2"/>
</dbReference>
<dbReference type="SMR" id="P99152"/>
<dbReference type="EnsemblBacteria" id="BAB41737">
    <property type="protein sequence ID" value="BAB41737"/>
    <property type="gene ID" value="BAB41737"/>
</dbReference>
<dbReference type="KEGG" id="sau:SA0506"/>
<dbReference type="HOGENOM" id="CLU_007265_0_0_9"/>
<dbReference type="GO" id="GO:0005829">
    <property type="term" value="C:cytosol"/>
    <property type="evidence" value="ECO:0007669"/>
    <property type="project" value="TreeGrafter"/>
</dbReference>
<dbReference type="GO" id="GO:0005525">
    <property type="term" value="F:GTP binding"/>
    <property type="evidence" value="ECO:0007669"/>
    <property type="project" value="UniProtKB-UniRule"/>
</dbReference>
<dbReference type="GO" id="GO:0003924">
    <property type="term" value="F:GTPase activity"/>
    <property type="evidence" value="ECO:0007669"/>
    <property type="project" value="InterPro"/>
</dbReference>
<dbReference type="GO" id="GO:0003746">
    <property type="term" value="F:translation elongation factor activity"/>
    <property type="evidence" value="ECO:0007669"/>
    <property type="project" value="UniProtKB-UniRule"/>
</dbReference>
<dbReference type="CDD" id="cd01884">
    <property type="entry name" value="EF_Tu"/>
    <property type="match status" value="1"/>
</dbReference>
<dbReference type="CDD" id="cd03697">
    <property type="entry name" value="EFTU_II"/>
    <property type="match status" value="1"/>
</dbReference>
<dbReference type="CDD" id="cd03707">
    <property type="entry name" value="EFTU_III"/>
    <property type="match status" value="1"/>
</dbReference>
<dbReference type="FunFam" id="2.40.30.10:FF:000001">
    <property type="entry name" value="Elongation factor Tu"/>
    <property type="match status" value="1"/>
</dbReference>
<dbReference type="FunFam" id="3.40.50.300:FF:000003">
    <property type="entry name" value="Elongation factor Tu"/>
    <property type="match status" value="1"/>
</dbReference>
<dbReference type="Gene3D" id="3.40.50.300">
    <property type="entry name" value="P-loop containing nucleotide triphosphate hydrolases"/>
    <property type="match status" value="1"/>
</dbReference>
<dbReference type="Gene3D" id="2.40.30.10">
    <property type="entry name" value="Translation factors"/>
    <property type="match status" value="2"/>
</dbReference>
<dbReference type="HAMAP" id="MF_00118_B">
    <property type="entry name" value="EF_Tu_B"/>
    <property type="match status" value="1"/>
</dbReference>
<dbReference type="InterPro" id="IPR041709">
    <property type="entry name" value="EF-Tu_GTP-bd"/>
</dbReference>
<dbReference type="InterPro" id="IPR050055">
    <property type="entry name" value="EF-Tu_GTPase"/>
</dbReference>
<dbReference type="InterPro" id="IPR004161">
    <property type="entry name" value="EFTu-like_2"/>
</dbReference>
<dbReference type="InterPro" id="IPR033720">
    <property type="entry name" value="EFTU_2"/>
</dbReference>
<dbReference type="InterPro" id="IPR031157">
    <property type="entry name" value="G_TR_CS"/>
</dbReference>
<dbReference type="InterPro" id="IPR027417">
    <property type="entry name" value="P-loop_NTPase"/>
</dbReference>
<dbReference type="InterPro" id="IPR005225">
    <property type="entry name" value="Small_GTP-bd"/>
</dbReference>
<dbReference type="InterPro" id="IPR000795">
    <property type="entry name" value="T_Tr_GTP-bd_dom"/>
</dbReference>
<dbReference type="InterPro" id="IPR009000">
    <property type="entry name" value="Transl_B-barrel_sf"/>
</dbReference>
<dbReference type="InterPro" id="IPR009001">
    <property type="entry name" value="Transl_elong_EF1A/Init_IF2_C"/>
</dbReference>
<dbReference type="InterPro" id="IPR004541">
    <property type="entry name" value="Transl_elong_EFTu/EF1A_bac/org"/>
</dbReference>
<dbReference type="InterPro" id="IPR004160">
    <property type="entry name" value="Transl_elong_EFTu/EF1A_C"/>
</dbReference>
<dbReference type="NCBIfam" id="TIGR00485">
    <property type="entry name" value="EF-Tu"/>
    <property type="match status" value="1"/>
</dbReference>
<dbReference type="NCBIfam" id="NF000766">
    <property type="entry name" value="PRK00049.1"/>
    <property type="match status" value="1"/>
</dbReference>
<dbReference type="NCBIfam" id="NF009372">
    <property type="entry name" value="PRK12735.1"/>
    <property type="match status" value="1"/>
</dbReference>
<dbReference type="NCBIfam" id="NF009373">
    <property type="entry name" value="PRK12736.1"/>
    <property type="match status" value="1"/>
</dbReference>
<dbReference type="NCBIfam" id="TIGR00231">
    <property type="entry name" value="small_GTP"/>
    <property type="match status" value="1"/>
</dbReference>
<dbReference type="PANTHER" id="PTHR43721:SF22">
    <property type="entry name" value="ELONGATION FACTOR TU, MITOCHONDRIAL"/>
    <property type="match status" value="1"/>
</dbReference>
<dbReference type="PANTHER" id="PTHR43721">
    <property type="entry name" value="ELONGATION FACTOR TU-RELATED"/>
    <property type="match status" value="1"/>
</dbReference>
<dbReference type="Pfam" id="PF00009">
    <property type="entry name" value="GTP_EFTU"/>
    <property type="match status" value="1"/>
</dbReference>
<dbReference type="Pfam" id="PF03144">
    <property type="entry name" value="GTP_EFTU_D2"/>
    <property type="match status" value="1"/>
</dbReference>
<dbReference type="Pfam" id="PF03143">
    <property type="entry name" value="GTP_EFTU_D3"/>
    <property type="match status" value="1"/>
</dbReference>
<dbReference type="PRINTS" id="PR00315">
    <property type="entry name" value="ELONGATNFCT"/>
</dbReference>
<dbReference type="SUPFAM" id="SSF50465">
    <property type="entry name" value="EF-Tu/eEF-1alpha/eIF2-gamma C-terminal domain"/>
    <property type="match status" value="1"/>
</dbReference>
<dbReference type="SUPFAM" id="SSF52540">
    <property type="entry name" value="P-loop containing nucleoside triphosphate hydrolases"/>
    <property type="match status" value="1"/>
</dbReference>
<dbReference type="SUPFAM" id="SSF50447">
    <property type="entry name" value="Translation proteins"/>
    <property type="match status" value="1"/>
</dbReference>
<dbReference type="PROSITE" id="PS00301">
    <property type="entry name" value="G_TR_1"/>
    <property type="match status" value="1"/>
</dbReference>
<dbReference type="PROSITE" id="PS51722">
    <property type="entry name" value="G_TR_2"/>
    <property type="match status" value="1"/>
</dbReference>
<organism>
    <name type="scientific">Staphylococcus aureus (strain N315)</name>
    <dbReference type="NCBI Taxonomy" id="158879"/>
    <lineage>
        <taxon>Bacteria</taxon>
        <taxon>Bacillati</taxon>
        <taxon>Bacillota</taxon>
        <taxon>Bacilli</taxon>
        <taxon>Bacillales</taxon>
        <taxon>Staphylococcaceae</taxon>
        <taxon>Staphylococcus</taxon>
    </lineage>
</organism>
<reference key="1">
    <citation type="journal article" date="2001" name="Lancet">
        <title>Whole genome sequencing of meticillin-resistant Staphylococcus aureus.</title>
        <authorList>
            <person name="Kuroda M."/>
            <person name="Ohta T."/>
            <person name="Uchiyama I."/>
            <person name="Baba T."/>
            <person name="Yuzawa H."/>
            <person name="Kobayashi I."/>
            <person name="Cui L."/>
            <person name="Oguchi A."/>
            <person name="Aoki K."/>
            <person name="Nagai Y."/>
            <person name="Lian J.-Q."/>
            <person name="Ito T."/>
            <person name="Kanamori M."/>
            <person name="Matsumaru H."/>
            <person name="Maruyama A."/>
            <person name="Murakami H."/>
            <person name="Hosoyama A."/>
            <person name="Mizutani-Ui Y."/>
            <person name="Takahashi N.K."/>
            <person name="Sawano T."/>
            <person name="Inoue R."/>
            <person name="Kaito C."/>
            <person name="Sekimizu K."/>
            <person name="Hirakawa H."/>
            <person name="Kuhara S."/>
            <person name="Goto S."/>
            <person name="Yabuzaki J."/>
            <person name="Kanehisa M."/>
            <person name="Yamashita A."/>
            <person name="Oshima K."/>
            <person name="Furuya K."/>
            <person name="Yoshino C."/>
            <person name="Shiba T."/>
            <person name="Hattori M."/>
            <person name="Ogasawara N."/>
            <person name="Hayashi H."/>
            <person name="Hiramatsu K."/>
        </authorList>
    </citation>
    <scope>NUCLEOTIDE SEQUENCE [LARGE SCALE GENOMIC DNA]</scope>
    <source>
        <strain>N315</strain>
    </source>
</reference>
<reference key="2">
    <citation type="journal article" date="2005" name="J. Microbiol. Methods">
        <title>Correlation of proteomic and transcriptomic profiles of Staphylococcus aureus during the post-exponential phase of growth.</title>
        <authorList>
            <person name="Scherl A."/>
            <person name="Francois P."/>
            <person name="Bento M."/>
            <person name="Deshusses J.M."/>
            <person name="Charbonnier Y."/>
            <person name="Converset V."/>
            <person name="Huyghe A."/>
            <person name="Walter N."/>
            <person name="Hoogland C."/>
            <person name="Appel R.D."/>
            <person name="Sanchez J.-C."/>
            <person name="Zimmermann-Ivol C.G."/>
            <person name="Corthals G.L."/>
            <person name="Hochstrasser D.F."/>
            <person name="Schrenzel J."/>
        </authorList>
    </citation>
    <scope>IDENTIFICATION BY MASS SPECTROMETRY</scope>
    <source>
        <strain>N315</strain>
    </source>
</reference>
<reference key="3">
    <citation type="submission" date="2007-10" db="UniProtKB">
        <title>Shotgun proteomic analysis of total and membrane protein extracts of S. aureus strain N315.</title>
        <authorList>
            <person name="Vaezzadeh A.R."/>
            <person name="Deshusses J."/>
            <person name="Lescuyer P."/>
            <person name="Hochstrasser D.F."/>
        </authorList>
    </citation>
    <scope>IDENTIFICATION BY MASS SPECTROMETRY [LARGE SCALE ANALYSIS]</scope>
    <source>
        <strain>N315</strain>
    </source>
</reference>
<protein>
    <recommendedName>
        <fullName evidence="2">Elongation factor Tu</fullName>
        <shortName evidence="2">EF-Tu</shortName>
        <ecNumber evidence="2">3.6.5.3</ecNumber>
    </recommendedName>
</protein>
<name>EFTU_STAAN</name>
<comment type="function">
    <text evidence="2">GTP hydrolase that promotes the GTP-dependent binding of aminoacyl-tRNA to the A-site of ribosomes during protein biosynthesis.</text>
</comment>
<comment type="catalytic activity">
    <reaction evidence="2">
        <text>GTP + H2O = GDP + phosphate + H(+)</text>
        <dbReference type="Rhea" id="RHEA:19669"/>
        <dbReference type="ChEBI" id="CHEBI:15377"/>
        <dbReference type="ChEBI" id="CHEBI:15378"/>
        <dbReference type="ChEBI" id="CHEBI:37565"/>
        <dbReference type="ChEBI" id="CHEBI:43474"/>
        <dbReference type="ChEBI" id="CHEBI:58189"/>
        <dbReference type="EC" id="3.6.5.3"/>
    </reaction>
    <physiologicalReaction direction="left-to-right" evidence="2">
        <dbReference type="Rhea" id="RHEA:19670"/>
    </physiologicalReaction>
</comment>
<comment type="subunit">
    <text evidence="2">Monomer.</text>
</comment>
<comment type="subcellular location">
    <subcellularLocation>
        <location>Cytoplasm</location>
    </subcellularLocation>
</comment>
<comment type="similarity">
    <text evidence="2">Belongs to the TRAFAC class translation factor GTPase superfamily. Classic translation factor GTPase family. EF-Tu/EF-1A subfamily.</text>
</comment>
<sequence>MAKEKFDRSKEHANIGTIGHVDHGKTTLTAAIATVLAKNGDSVAQSYDMIDNAPEEKERGITINTSHIEYQTDKRHYAHVDCPGHADYVKNMITGAAQMDGGILVVSAADGPMPQTREHILLSRNVGVPALVVFLNKVDMVDDEELLELVEMEVRDLLSEYDFPGDDVPVIAGSALKALEGDAQYEEKILELMEAVDTYIPTPERDSDKPFMMPVEDVFSITGRGTVATGRVERGQIKVGEEVEIIGLHDTSKTTVTGVEMFRKLLDYAEAGDNIGALLRGVAREDVQRGQVLAAPGSITPHTEFKAEVYVLSKDEGGRHTPFFSNYRPQFYFRTTDVTGVVHLPEGTEMVMPGDNVEMTVELIAPIAIEDGTRFSIREGGRTVGSGVVTEIIK</sequence>
<evidence type="ECO:0000250" key="1"/>
<evidence type="ECO:0000255" key="2">
    <source>
        <dbReference type="HAMAP-Rule" id="MF_00118"/>
    </source>
</evidence>
<accession>P99152</accession>
<accession>Q99W61</accession>
<gene>
    <name evidence="2" type="primary">tuf</name>
    <name type="synonym">tufA</name>
    <name type="ordered locus">SA0506</name>
</gene>
<keyword id="KW-0963">Cytoplasm</keyword>
<keyword id="KW-0251">Elongation factor</keyword>
<keyword id="KW-0342">GTP-binding</keyword>
<keyword id="KW-0378">Hydrolase</keyword>
<keyword id="KW-0460">Magnesium</keyword>
<keyword id="KW-0479">Metal-binding</keyword>
<keyword id="KW-0547">Nucleotide-binding</keyword>
<keyword id="KW-0648">Protein biosynthesis</keyword>